<sequence length="500" mass="55294">MLDSTRIFMKAFHLLLFDGSLIFPECILIFGLILLLMIDSTSDQKDIPWFYFISSTSLVMSITALLFRWREEPMISFSGNFQTNHFNEIFQFLILLCSTLSIPLSVEYIECTEMAITEFLLFILTATLGGMFLCGANDFITIFVAPECFSLCSYLLSGYTKKDVRSNEATMKYLLMGGASSSILVHAFSWLYGSSGGEIELQEIVNGLINTQMYNSPGISIALIFITVGIGFKLSPAPSHQWTPDVYEGSPTPVVAFLSVTSKVAASASATRIFDIPFYFSSNEWHLLLEILAILSMILGNLIAITQTSMKRMLAYSSIGQIGYVIIGIIVGDSNGGYASMITYMLFYISMNLGTFACIVLFGLRTGTDNIRDYAGLYTKDPFLALSLALCLLSLGGLPPLAGFFGKLHLFWCGWQAGLSFLVSIGLLTSVLSIYYYLKIIKLLMTGRNQEITPHVRNYKRSPLRSKNSIELSMIVCVIASTIPGISMNPIIAIAQDTLF</sequence>
<reference key="1">
    <citation type="journal article" date="2006" name="Mol. Biol. Evol.">
        <title>The complete chloroplast genome sequence of Pelargonium x hortorum: organization and evolution of the largest and most highly rearranged chloroplast genome of land plants.</title>
        <authorList>
            <person name="Chumley T.W."/>
            <person name="Palmer J.D."/>
            <person name="Mower J.P."/>
            <person name="Fourcade H.M."/>
            <person name="Calie P.J."/>
            <person name="Boore J.L."/>
            <person name="Jansen R.K."/>
        </authorList>
    </citation>
    <scope>NUCLEOTIDE SEQUENCE [LARGE SCALE GENOMIC DNA]</scope>
    <source>
        <strain>cv. Ringo White</strain>
    </source>
</reference>
<feature type="chain" id="PRO_0000275604" description="NAD(P)H-quinone oxidoreductase subunit 2 A, chloroplastic">
    <location>
        <begin position="1"/>
        <end position="500"/>
    </location>
</feature>
<feature type="transmembrane region" description="Helical" evidence="1">
    <location>
        <begin position="14"/>
        <end position="34"/>
    </location>
</feature>
<feature type="transmembrane region" description="Helical" evidence="1">
    <location>
        <begin position="47"/>
        <end position="67"/>
    </location>
</feature>
<feature type="transmembrane region" description="Helical" evidence="1">
    <location>
        <begin position="89"/>
        <end position="109"/>
    </location>
</feature>
<feature type="transmembrane region" description="Helical" evidence="1">
    <location>
        <begin position="114"/>
        <end position="134"/>
    </location>
</feature>
<feature type="transmembrane region" description="Helical" evidence="1">
    <location>
        <begin position="139"/>
        <end position="159"/>
    </location>
</feature>
<feature type="transmembrane region" description="Helical" evidence="1">
    <location>
        <begin position="173"/>
        <end position="193"/>
    </location>
</feature>
<feature type="transmembrane region" description="Helical" evidence="1">
    <location>
        <begin position="217"/>
        <end position="237"/>
    </location>
</feature>
<feature type="transmembrane region" description="Helical" evidence="1">
    <location>
        <begin position="285"/>
        <end position="305"/>
    </location>
</feature>
<feature type="transmembrane region" description="Helical" evidence="1">
    <location>
        <begin position="313"/>
        <end position="333"/>
    </location>
</feature>
<feature type="transmembrane region" description="Helical" evidence="1">
    <location>
        <begin position="344"/>
        <end position="364"/>
    </location>
</feature>
<feature type="transmembrane region" description="Helical" evidence="1">
    <location>
        <begin position="385"/>
        <end position="405"/>
    </location>
</feature>
<feature type="transmembrane region" description="Helical" evidence="1">
    <location>
        <begin position="408"/>
        <end position="428"/>
    </location>
</feature>
<feature type="transmembrane region" description="Helical" evidence="1">
    <location>
        <begin position="474"/>
        <end position="494"/>
    </location>
</feature>
<accession>P0CD26</accession>
<accession>Q06FM1</accession>
<geneLocation type="chloroplast"/>
<protein>
    <recommendedName>
        <fullName evidence="1">NAD(P)H-quinone oxidoreductase subunit 2 A, chloroplastic</fullName>
        <ecNumber evidence="1">7.1.1.-</ecNumber>
    </recommendedName>
    <alternativeName>
        <fullName evidence="1">NAD(P)H dehydrogenase, subunit 2 A</fullName>
    </alternativeName>
    <alternativeName>
        <fullName evidence="1">NADH-plastoquinone oxidoreductase subunit 2 A</fullName>
    </alternativeName>
</protein>
<evidence type="ECO:0000255" key="1">
    <source>
        <dbReference type="HAMAP-Rule" id="MF_00445"/>
    </source>
</evidence>
<organism>
    <name type="scientific">Pelargonium hortorum</name>
    <name type="common">Common geranium</name>
    <name type="synonym">Pelargonium inquinans x Pelargonium zonale</name>
    <dbReference type="NCBI Taxonomy" id="4031"/>
    <lineage>
        <taxon>Eukaryota</taxon>
        <taxon>Viridiplantae</taxon>
        <taxon>Streptophyta</taxon>
        <taxon>Embryophyta</taxon>
        <taxon>Tracheophyta</taxon>
        <taxon>Spermatophyta</taxon>
        <taxon>Magnoliopsida</taxon>
        <taxon>eudicotyledons</taxon>
        <taxon>Gunneridae</taxon>
        <taxon>Pentapetalae</taxon>
        <taxon>rosids</taxon>
        <taxon>malvids</taxon>
        <taxon>Geraniales</taxon>
        <taxon>Geraniaceae</taxon>
        <taxon>Pelargonium</taxon>
    </lineage>
</organism>
<name>NU2C1_PELHO</name>
<keyword id="KW-0150">Chloroplast</keyword>
<keyword id="KW-0472">Membrane</keyword>
<keyword id="KW-0520">NAD</keyword>
<keyword id="KW-0521">NADP</keyword>
<keyword id="KW-0934">Plastid</keyword>
<keyword id="KW-0618">Plastoquinone</keyword>
<keyword id="KW-0874">Quinone</keyword>
<keyword id="KW-0793">Thylakoid</keyword>
<keyword id="KW-1278">Translocase</keyword>
<keyword id="KW-0812">Transmembrane</keyword>
<keyword id="KW-1133">Transmembrane helix</keyword>
<keyword id="KW-0813">Transport</keyword>
<comment type="function">
    <text evidence="1">NDH shuttles electrons from NAD(P)H:plastoquinone, via FMN and iron-sulfur (Fe-S) centers, to quinones in the photosynthetic chain and possibly in a chloroplast respiratory chain. The immediate electron acceptor for the enzyme in this species is believed to be plastoquinone. Couples the redox reaction to proton translocation, and thus conserves the redox energy in a proton gradient.</text>
</comment>
<comment type="catalytic activity">
    <reaction evidence="1">
        <text>a plastoquinone + NADH + (n+1) H(+)(in) = a plastoquinol + NAD(+) + n H(+)(out)</text>
        <dbReference type="Rhea" id="RHEA:42608"/>
        <dbReference type="Rhea" id="RHEA-COMP:9561"/>
        <dbReference type="Rhea" id="RHEA-COMP:9562"/>
        <dbReference type="ChEBI" id="CHEBI:15378"/>
        <dbReference type="ChEBI" id="CHEBI:17757"/>
        <dbReference type="ChEBI" id="CHEBI:57540"/>
        <dbReference type="ChEBI" id="CHEBI:57945"/>
        <dbReference type="ChEBI" id="CHEBI:62192"/>
    </reaction>
</comment>
<comment type="catalytic activity">
    <reaction evidence="1">
        <text>a plastoquinone + NADPH + (n+1) H(+)(in) = a plastoquinol + NADP(+) + n H(+)(out)</text>
        <dbReference type="Rhea" id="RHEA:42612"/>
        <dbReference type="Rhea" id="RHEA-COMP:9561"/>
        <dbReference type="Rhea" id="RHEA-COMP:9562"/>
        <dbReference type="ChEBI" id="CHEBI:15378"/>
        <dbReference type="ChEBI" id="CHEBI:17757"/>
        <dbReference type="ChEBI" id="CHEBI:57783"/>
        <dbReference type="ChEBI" id="CHEBI:58349"/>
        <dbReference type="ChEBI" id="CHEBI:62192"/>
    </reaction>
</comment>
<comment type="subunit">
    <text evidence="1">NDH is composed of at least 16 different subunits, 5 of which are encoded in the nucleus.</text>
</comment>
<comment type="subcellular location">
    <subcellularLocation>
        <location evidence="1">Plastid</location>
        <location evidence="1">Chloroplast thylakoid membrane</location>
        <topology evidence="1">Multi-pass membrane protein</topology>
    </subcellularLocation>
</comment>
<comment type="similarity">
    <text evidence="1">Belongs to the complex I subunit 2 family.</text>
</comment>
<proteinExistence type="inferred from homology"/>
<gene>
    <name evidence="1" type="primary">ndhB1</name>
</gene>
<dbReference type="EC" id="7.1.1.-" evidence="1"/>
<dbReference type="EMBL" id="DQ897681">
    <property type="protein sequence ID" value="ABI17288.1"/>
    <property type="molecule type" value="Genomic_DNA"/>
</dbReference>
<dbReference type="SMR" id="P0CD26"/>
<dbReference type="GO" id="GO:0009535">
    <property type="term" value="C:chloroplast thylakoid membrane"/>
    <property type="evidence" value="ECO:0007669"/>
    <property type="project" value="UniProtKB-SubCell"/>
</dbReference>
<dbReference type="GO" id="GO:0008137">
    <property type="term" value="F:NADH dehydrogenase (ubiquinone) activity"/>
    <property type="evidence" value="ECO:0007669"/>
    <property type="project" value="InterPro"/>
</dbReference>
<dbReference type="GO" id="GO:0048038">
    <property type="term" value="F:quinone binding"/>
    <property type="evidence" value="ECO:0007669"/>
    <property type="project" value="UniProtKB-KW"/>
</dbReference>
<dbReference type="GO" id="GO:0042773">
    <property type="term" value="P:ATP synthesis coupled electron transport"/>
    <property type="evidence" value="ECO:0007669"/>
    <property type="project" value="InterPro"/>
</dbReference>
<dbReference type="GO" id="GO:0019684">
    <property type="term" value="P:photosynthesis, light reaction"/>
    <property type="evidence" value="ECO:0007669"/>
    <property type="project" value="UniProtKB-UniRule"/>
</dbReference>
<dbReference type="HAMAP" id="MF_00445">
    <property type="entry name" value="NDH1_NuoN_1"/>
    <property type="match status" value="1"/>
</dbReference>
<dbReference type="InterPro" id="IPR010096">
    <property type="entry name" value="NADH-Q_OxRdtase_suN/2"/>
</dbReference>
<dbReference type="InterPro" id="IPR001750">
    <property type="entry name" value="ND/Mrp_TM"/>
</dbReference>
<dbReference type="InterPro" id="IPR045693">
    <property type="entry name" value="Ndh2_N"/>
</dbReference>
<dbReference type="NCBIfam" id="TIGR01770">
    <property type="entry name" value="NDH_I_N"/>
    <property type="match status" value="1"/>
</dbReference>
<dbReference type="NCBIfam" id="NF002701">
    <property type="entry name" value="PRK02504.1"/>
    <property type="match status" value="1"/>
</dbReference>
<dbReference type="PANTHER" id="PTHR22773">
    <property type="entry name" value="NADH DEHYDROGENASE"/>
    <property type="match status" value="1"/>
</dbReference>
<dbReference type="Pfam" id="PF19530">
    <property type="entry name" value="Ndh2_N"/>
    <property type="match status" value="1"/>
</dbReference>
<dbReference type="Pfam" id="PF00361">
    <property type="entry name" value="Proton_antipo_M"/>
    <property type="match status" value="1"/>
</dbReference>
<dbReference type="PRINTS" id="PR01434">
    <property type="entry name" value="NADHDHGNASE5"/>
</dbReference>